<reference key="1">
    <citation type="submission" date="2006-08" db="EMBL/GenBank/DDBJ databases">
        <title>Complete sequence of chromosome 1 of Burkholderia cepacia AMMD.</title>
        <authorList>
            <person name="Copeland A."/>
            <person name="Lucas S."/>
            <person name="Lapidus A."/>
            <person name="Barry K."/>
            <person name="Detter J.C."/>
            <person name="Glavina del Rio T."/>
            <person name="Hammon N."/>
            <person name="Israni S."/>
            <person name="Pitluck S."/>
            <person name="Bruce D."/>
            <person name="Chain P."/>
            <person name="Malfatti S."/>
            <person name="Shin M."/>
            <person name="Vergez L."/>
            <person name="Schmutz J."/>
            <person name="Larimer F."/>
            <person name="Land M."/>
            <person name="Hauser L."/>
            <person name="Kyrpides N."/>
            <person name="Kim E."/>
            <person name="Parke J."/>
            <person name="Coenye T."/>
            <person name="Konstantinidis K."/>
            <person name="Ramette A."/>
            <person name="Tiedje J."/>
            <person name="Richardson P."/>
        </authorList>
    </citation>
    <scope>NUCLEOTIDE SEQUENCE [LARGE SCALE GENOMIC DNA]</scope>
    <source>
        <strain>ATCC BAA-244 / DSM 16087 / CCUG 44356 / LMG 19182 / AMMD</strain>
    </source>
</reference>
<keyword id="KW-0413">Isomerase</keyword>
<gene>
    <name evidence="1" type="primary">rpiA</name>
    <name type="ordered locus">Bamb_1450</name>
</gene>
<organism>
    <name type="scientific">Burkholderia ambifaria (strain ATCC BAA-244 / DSM 16087 / CCUG 44356 / LMG 19182 / AMMD)</name>
    <name type="common">Burkholderia cepacia (strain AMMD)</name>
    <dbReference type="NCBI Taxonomy" id="339670"/>
    <lineage>
        <taxon>Bacteria</taxon>
        <taxon>Pseudomonadati</taxon>
        <taxon>Pseudomonadota</taxon>
        <taxon>Betaproteobacteria</taxon>
        <taxon>Burkholderiales</taxon>
        <taxon>Burkholderiaceae</taxon>
        <taxon>Burkholderia</taxon>
        <taxon>Burkholderia cepacia complex</taxon>
    </lineage>
</organism>
<sequence length="230" mass="23891">MTQDELKRLVGQAAADYVIQNVPEGAVIGVGTGSTANCFIDALAAVKARYRGAVSSSLATTERLKSHGIKVFDLNEIESLQVYVDGADEIDASGAMIKGGGGALTREKIVASVADTFVCIADASKRVPVLGAFPLPIEVVPMARTAIGRRVTALGGVPVLRVTKDGAPYITDNGNEIIDVKGLQIADPRGFEAQVNAWPGVVTVGLFAERGANLCLLGTPNGVETIVYPA</sequence>
<feature type="chain" id="PRO_1000016908" description="Ribose-5-phosphate isomerase A">
    <location>
        <begin position="1"/>
        <end position="230"/>
    </location>
</feature>
<feature type="active site" description="Proton acceptor" evidence="1">
    <location>
        <position position="107"/>
    </location>
</feature>
<feature type="binding site" evidence="1">
    <location>
        <begin position="32"/>
        <end position="35"/>
    </location>
    <ligand>
        <name>substrate</name>
    </ligand>
</feature>
<feature type="binding site" evidence="1">
    <location>
        <begin position="85"/>
        <end position="88"/>
    </location>
    <ligand>
        <name>substrate</name>
    </ligand>
</feature>
<feature type="binding site" evidence="1">
    <location>
        <begin position="98"/>
        <end position="101"/>
    </location>
    <ligand>
        <name>substrate</name>
    </ligand>
</feature>
<feature type="binding site" evidence="1">
    <location>
        <position position="125"/>
    </location>
    <ligand>
        <name>substrate</name>
    </ligand>
</feature>
<protein>
    <recommendedName>
        <fullName evidence="1">Ribose-5-phosphate isomerase A</fullName>
        <ecNumber evidence="1">5.3.1.6</ecNumber>
    </recommendedName>
    <alternativeName>
        <fullName evidence="1">Phosphoriboisomerase A</fullName>
        <shortName evidence="1">PRI</shortName>
    </alternativeName>
</protein>
<evidence type="ECO:0000255" key="1">
    <source>
        <dbReference type="HAMAP-Rule" id="MF_00170"/>
    </source>
</evidence>
<comment type="function">
    <text evidence="1">Catalyzes the reversible conversion of ribose-5-phosphate to ribulose 5-phosphate.</text>
</comment>
<comment type="catalytic activity">
    <reaction evidence="1">
        <text>aldehydo-D-ribose 5-phosphate = D-ribulose 5-phosphate</text>
        <dbReference type="Rhea" id="RHEA:14657"/>
        <dbReference type="ChEBI" id="CHEBI:58121"/>
        <dbReference type="ChEBI" id="CHEBI:58273"/>
        <dbReference type="EC" id="5.3.1.6"/>
    </reaction>
</comment>
<comment type="pathway">
    <text evidence="1">Carbohydrate degradation; pentose phosphate pathway; D-ribose 5-phosphate from D-ribulose 5-phosphate (non-oxidative stage): step 1/1.</text>
</comment>
<comment type="subunit">
    <text evidence="1">Homodimer.</text>
</comment>
<comment type="similarity">
    <text evidence="1">Belongs to the ribose 5-phosphate isomerase family.</text>
</comment>
<proteinExistence type="inferred from homology"/>
<name>RPIA_BURCM</name>
<dbReference type="EC" id="5.3.1.6" evidence="1"/>
<dbReference type="EMBL" id="CP000440">
    <property type="protein sequence ID" value="ABI87008.1"/>
    <property type="molecule type" value="Genomic_DNA"/>
</dbReference>
<dbReference type="RefSeq" id="WP_011656751.1">
    <property type="nucleotide sequence ID" value="NC_008390.1"/>
</dbReference>
<dbReference type="SMR" id="Q0BFR5"/>
<dbReference type="GeneID" id="93083149"/>
<dbReference type="KEGG" id="bam:Bamb_1450"/>
<dbReference type="PATRIC" id="fig|339670.21.peg.87"/>
<dbReference type="eggNOG" id="COG0120">
    <property type="taxonomic scope" value="Bacteria"/>
</dbReference>
<dbReference type="UniPathway" id="UPA00115">
    <property type="reaction ID" value="UER00412"/>
</dbReference>
<dbReference type="Proteomes" id="UP000000662">
    <property type="component" value="Chromosome 1"/>
</dbReference>
<dbReference type="GO" id="GO:0005829">
    <property type="term" value="C:cytosol"/>
    <property type="evidence" value="ECO:0007669"/>
    <property type="project" value="TreeGrafter"/>
</dbReference>
<dbReference type="GO" id="GO:0004751">
    <property type="term" value="F:ribose-5-phosphate isomerase activity"/>
    <property type="evidence" value="ECO:0007669"/>
    <property type="project" value="UniProtKB-UniRule"/>
</dbReference>
<dbReference type="GO" id="GO:0006014">
    <property type="term" value="P:D-ribose metabolic process"/>
    <property type="evidence" value="ECO:0007669"/>
    <property type="project" value="TreeGrafter"/>
</dbReference>
<dbReference type="GO" id="GO:0009052">
    <property type="term" value="P:pentose-phosphate shunt, non-oxidative branch"/>
    <property type="evidence" value="ECO:0007669"/>
    <property type="project" value="UniProtKB-UniRule"/>
</dbReference>
<dbReference type="CDD" id="cd01398">
    <property type="entry name" value="RPI_A"/>
    <property type="match status" value="1"/>
</dbReference>
<dbReference type="FunFam" id="3.40.50.1360:FF:000001">
    <property type="entry name" value="Ribose-5-phosphate isomerase A"/>
    <property type="match status" value="1"/>
</dbReference>
<dbReference type="Gene3D" id="3.30.70.260">
    <property type="match status" value="1"/>
</dbReference>
<dbReference type="Gene3D" id="3.40.50.1360">
    <property type="match status" value="1"/>
</dbReference>
<dbReference type="HAMAP" id="MF_00170">
    <property type="entry name" value="Rib_5P_isom_A"/>
    <property type="match status" value="1"/>
</dbReference>
<dbReference type="InterPro" id="IPR037171">
    <property type="entry name" value="NagB/RpiA_transferase-like"/>
</dbReference>
<dbReference type="InterPro" id="IPR020672">
    <property type="entry name" value="Ribose5P_isomerase_typA_subgr"/>
</dbReference>
<dbReference type="InterPro" id="IPR004788">
    <property type="entry name" value="Ribose5P_isomerase_type_A"/>
</dbReference>
<dbReference type="NCBIfam" id="NF001924">
    <property type="entry name" value="PRK00702.1"/>
    <property type="match status" value="1"/>
</dbReference>
<dbReference type="NCBIfam" id="TIGR00021">
    <property type="entry name" value="rpiA"/>
    <property type="match status" value="1"/>
</dbReference>
<dbReference type="PANTHER" id="PTHR11934">
    <property type="entry name" value="RIBOSE-5-PHOSPHATE ISOMERASE"/>
    <property type="match status" value="1"/>
</dbReference>
<dbReference type="PANTHER" id="PTHR11934:SF0">
    <property type="entry name" value="RIBOSE-5-PHOSPHATE ISOMERASE"/>
    <property type="match status" value="1"/>
</dbReference>
<dbReference type="Pfam" id="PF06026">
    <property type="entry name" value="Rib_5-P_isom_A"/>
    <property type="match status" value="1"/>
</dbReference>
<dbReference type="SUPFAM" id="SSF75445">
    <property type="entry name" value="D-ribose-5-phosphate isomerase (RpiA), lid domain"/>
    <property type="match status" value="1"/>
</dbReference>
<dbReference type="SUPFAM" id="SSF100950">
    <property type="entry name" value="NagB/RpiA/CoA transferase-like"/>
    <property type="match status" value="1"/>
</dbReference>
<accession>Q0BFR5</accession>